<proteinExistence type="evidence at protein level"/>
<gene>
    <name type="primary">EMB1687</name>
    <name evidence="5" type="ordered locus">At1g04635</name>
    <name evidence="6" type="ORF">T1G11.24</name>
</gene>
<reference key="1">
    <citation type="journal article" date="2000" name="Nature">
        <title>Sequence and analysis of chromosome 1 of the plant Arabidopsis thaliana.</title>
        <authorList>
            <person name="Theologis A."/>
            <person name="Ecker J.R."/>
            <person name="Palm C.J."/>
            <person name="Federspiel N.A."/>
            <person name="Kaul S."/>
            <person name="White O."/>
            <person name="Alonso J."/>
            <person name="Altafi H."/>
            <person name="Araujo R."/>
            <person name="Bowman C.L."/>
            <person name="Brooks S.Y."/>
            <person name="Buehler E."/>
            <person name="Chan A."/>
            <person name="Chao Q."/>
            <person name="Chen H."/>
            <person name="Cheuk R.F."/>
            <person name="Chin C.W."/>
            <person name="Chung M.K."/>
            <person name="Conn L."/>
            <person name="Conway A.B."/>
            <person name="Conway A.R."/>
            <person name="Creasy T.H."/>
            <person name="Dewar K."/>
            <person name="Dunn P."/>
            <person name="Etgu P."/>
            <person name="Feldblyum T.V."/>
            <person name="Feng J.-D."/>
            <person name="Fong B."/>
            <person name="Fujii C.Y."/>
            <person name="Gill J.E."/>
            <person name="Goldsmith A.D."/>
            <person name="Haas B."/>
            <person name="Hansen N.F."/>
            <person name="Hughes B."/>
            <person name="Huizar L."/>
            <person name="Hunter J.L."/>
            <person name="Jenkins J."/>
            <person name="Johnson-Hopson C."/>
            <person name="Khan S."/>
            <person name="Khaykin E."/>
            <person name="Kim C.J."/>
            <person name="Koo H.L."/>
            <person name="Kremenetskaia I."/>
            <person name="Kurtz D.B."/>
            <person name="Kwan A."/>
            <person name="Lam B."/>
            <person name="Langin-Hooper S."/>
            <person name="Lee A."/>
            <person name="Lee J.M."/>
            <person name="Lenz C.A."/>
            <person name="Li J.H."/>
            <person name="Li Y.-P."/>
            <person name="Lin X."/>
            <person name="Liu S.X."/>
            <person name="Liu Z.A."/>
            <person name="Luros J.S."/>
            <person name="Maiti R."/>
            <person name="Marziali A."/>
            <person name="Militscher J."/>
            <person name="Miranda M."/>
            <person name="Nguyen M."/>
            <person name="Nierman W.C."/>
            <person name="Osborne B.I."/>
            <person name="Pai G."/>
            <person name="Peterson J."/>
            <person name="Pham P.K."/>
            <person name="Rizzo M."/>
            <person name="Rooney T."/>
            <person name="Rowley D."/>
            <person name="Sakano H."/>
            <person name="Salzberg S.L."/>
            <person name="Schwartz J.R."/>
            <person name="Shinn P."/>
            <person name="Southwick A.M."/>
            <person name="Sun H."/>
            <person name="Tallon L.J."/>
            <person name="Tambunga G."/>
            <person name="Toriumi M.J."/>
            <person name="Town C.D."/>
            <person name="Utterback T."/>
            <person name="Van Aken S."/>
            <person name="Vaysberg M."/>
            <person name="Vysotskaia V.S."/>
            <person name="Walker M."/>
            <person name="Wu D."/>
            <person name="Yu G."/>
            <person name="Fraser C.M."/>
            <person name="Venter J.C."/>
            <person name="Davis R.W."/>
        </authorList>
    </citation>
    <scope>NUCLEOTIDE SEQUENCE [LARGE SCALE GENOMIC DNA]</scope>
    <source>
        <strain>cv. Columbia</strain>
    </source>
</reference>
<reference key="2">
    <citation type="journal article" date="2017" name="Plant J.">
        <title>Araport11: a complete reannotation of the Arabidopsis thaliana reference genome.</title>
        <authorList>
            <person name="Cheng C.Y."/>
            <person name="Krishnakumar V."/>
            <person name="Chan A.P."/>
            <person name="Thibaud-Nissen F."/>
            <person name="Schobel S."/>
            <person name="Town C.D."/>
        </authorList>
    </citation>
    <scope>GENOME REANNOTATION</scope>
    <source>
        <strain>cv. Columbia</strain>
    </source>
</reference>
<reference key="3">
    <citation type="journal article" date="2003" name="Science">
        <title>Empirical analysis of transcriptional activity in the Arabidopsis genome.</title>
        <authorList>
            <person name="Yamada K."/>
            <person name="Lim J."/>
            <person name="Dale J.M."/>
            <person name="Chen H."/>
            <person name="Shinn P."/>
            <person name="Palm C.J."/>
            <person name="Southwick A.M."/>
            <person name="Wu H.C."/>
            <person name="Kim C.J."/>
            <person name="Nguyen M."/>
            <person name="Pham P.K."/>
            <person name="Cheuk R.F."/>
            <person name="Karlin-Newmann G."/>
            <person name="Liu S.X."/>
            <person name="Lam B."/>
            <person name="Sakano H."/>
            <person name="Wu T."/>
            <person name="Yu G."/>
            <person name="Miranda M."/>
            <person name="Quach H.L."/>
            <person name="Tripp M."/>
            <person name="Chang C.H."/>
            <person name="Lee J.M."/>
            <person name="Toriumi M.J."/>
            <person name="Chan M.M."/>
            <person name="Tang C.C."/>
            <person name="Onodera C.S."/>
            <person name="Deng J.M."/>
            <person name="Akiyama K."/>
            <person name="Ansari Y."/>
            <person name="Arakawa T."/>
            <person name="Banh J."/>
            <person name="Banno F."/>
            <person name="Bowser L."/>
            <person name="Brooks S.Y."/>
            <person name="Carninci P."/>
            <person name="Chao Q."/>
            <person name="Choy N."/>
            <person name="Enju A."/>
            <person name="Goldsmith A.D."/>
            <person name="Gurjal M."/>
            <person name="Hansen N.F."/>
            <person name="Hayashizaki Y."/>
            <person name="Johnson-Hopson C."/>
            <person name="Hsuan V.W."/>
            <person name="Iida K."/>
            <person name="Karnes M."/>
            <person name="Khan S."/>
            <person name="Koesema E."/>
            <person name="Ishida J."/>
            <person name="Jiang P.X."/>
            <person name="Jones T."/>
            <person name="Kawai J."/>
            <person name="Kamiya A."/>
            <person name="Meyers C."/>
            <person name="Nakajima M."/>
            <person name="Narusaka M."/>
            <person name="Seki M."/>
            <person name="Sakurai T."/>
            <person name="Satou M."/>
            <person name="Tamse R."/>
            <person name="Vaysberg M."/>
            <person name="Wallender E.K."/>
            <person name="Wong C."/>
            <person name="Yamamura Y."/>
            <person name="Yuan S."/>
            <person name="Shinozaki K."/>
            <person name="Davis R.W."/>
            <person name="Theologis A."/>
            <person name="Ecker J.R."/>
        </authorList>
    </citation>
    <scope>NUCLEOTIDE SEQUENCE [LARGE SCALE MRNA]</scope>
    <source>
        <strain>cv. Columbia</strain>
    </source>
</reference>
<reference key="4">
    <citation type="journal article" date="2004" name="Plant Physiol.">
        <title>Identification of genes required for embryo development in Arabidopsis.</title>
        <authorList>
            <person name="Tzafrir I."/>
            <person name="Pena-Muralla R."/>
            <person name="Dickerman A."/>
            <person name="Berg M."/>
            <person name="Rogers R."/>
            <person name="Hutchens S."/>
            <person name="Sweeney T.C."/>
            <person name="McElver J."/>
            <person name="Aux G."/>
            <person name="Patton D."/>
            <person name="Meinke D."/>
        </authorList>
    </citation>
    <scope>FUNCTION [LARGE SCALE ANALYSIS]</scope>
    <scope>DISRUPTION PHENOTYPE [LARGE SCALE ANALYSIS]</scope>
    <source>
        <strain>cv. Columbia</strain>
    </source>
</reference>
<reference key="5">
    <citation type="journal article" date="2012" name="PLoS ONE">
        <title>GAMETOPHYTE DEFECTIVE 1, a putative subunit of RNases P/MRP, is essential for female gametogenesis and male competence in Arabidopsis.</title>
        <authorList>
            <person name="Wang S.-Q."/>
            <person name="Shi D.-Q."/>
            <person name="Long Y.-P."/>
            <person name="Liu J."/>
            <person name="Yang W.-C."/>
        </authorList>
    </citation>
    <scope>INTERACTION WITH GAF1/RPP30</scope>
</reference>
<sequence length="151" mass="17017">MVGFKNRYMLMEVFLDPDKDLLGEGTPIILTQFNLSKAIKDSILVNFGECGLGSSLGSFQVKYVNPITKLCIVRSSREEHRQVWLAITLVKSIGNCPVILNLLDISGCIRACRDTALKCDKEKFEQCSKSLSEEEIRQMNTSLEKIKLLEN</sequence>
<evidence type="ECO:0000250" key="1">
    <source>
        <dbReference type="UniProtKB" id="Q969H6"/>
    </source>
</evidence>
<evidence type="ECO:0000269" key="2">
    <source>
    </source>
</evidence>
<evidence type="ECO:0000269" key="3">
    <source>
    </source>
</evidence>
<evidence type="ECO:0000305" key="4"/>
<evidence type="ECO:0000312" key="5">
    <source>
        <dbReference type="Araport" id="AT1G04635"/>
    </source>
</evidence>
<evidence type="ECO:0000312" key="6">
    <source>
        <dbReference type="EMBL" id="AAB80636.1"/>
    </source>
</evidence>
<feature type="chain" id="PRO_0000140013" description="Probable ribonuclease P/MRP protein subunit POP5">
    <location>
        <begin position="1"/>
        <end position="151"/>
    </location>
</feature>
<organism>
    <name type="scientific">Arabidopsis thaliana</name>
    <name type="common">Mouse-ear cress</name>
    <dbReference type="NCBI Taxonomy" id="3702"/>
    <lineage>
        <taxon>Eukaryota</taxon>
        <taxon>Viridiplantae</taxon>
        <taxon>Streptophyta</taxon>
        <taxon>Embryophyta</taxon>
        <taxon>Tracheophyta</taxon>
        <taxon>Spermatophyta</taxon>
        <taxon>Magnoliopsida</taxon>
        <taxon>eudicotyledons</taxon>
        <taxon>Gunneridae</taxon>
        <taxon>Pentapetalae</taxon>
        <taxon>rosids</taxon>
        <taxon>malvids</taxon>
        <taxon>Brassicales</taxon>
        <taxon>Brassicaceae</taxon>
        <taxon>Camelineae</taxon>
        <taxon>Arabidopsis</taxon>
    </lineage>
</organism>
<keyword id="KW-0539">Nucleus</keyword>
<keyword id="KW-1185">Reference proteome</keyword>
<keyword id="KW-0819">tRNA processing</keyword>
<comment type="function">
    <text evidence="1 2">Essential protein required during embryogenesis (PubMed:15266054). Component of ribonuclease P, a protein complex that generates mature tRNA molecules by cleaving their 5'-ends (By similarity). Also a component of RNase MRP (By similarity).</text>
</comment>
<comment type="subunit">
    <text evidence="1 3">Component of nuclear RNase P and RNase MRP ribonucleoproteins (By similarity). Interacts with GAF1/RPP30 (PubMed:22509260).</text>
</comment>
<comment type="subcellular location">
    <subcellularLocation>
        <location evidence="1">Nucleus</location>
        <location evidence="1">Nucleolus</location>
    </subcellularLocation>
</comment>
<comment type="disruption phenotype">
    <text evidence="2">Defective embryo arrested at the globular stage.</text>
</comment>
<comment type="similarity">
    <text evidence="4">Belongs to the eukaryotic/archaeal RNase P protein component 2 family.</text>
</comment>
<comment type="sequence caution" evidence="4">
    <conflict type="erroneous gene model prediction">
        <sequence resource="EMBL-CDS" id="AAB80636"/>
    </conflict>
    <text>The predicted gene At1g04640 has been split into 2 genes: At1g04635 and At1g04640.</text>
</comment>
<comment type="online information" name="Seed defective Arabidopsis mutants">
    <link uri="http://seedgenes.org/MutantList"/>
</comment>
<accession>Q6AWV1</accession>
<accession>O23021</accession>
<dbReference type="EMBL" id="AC002376">
    <property type="protein sequence ID" value="AAB80636.1"/>
    <property type="status" value="ALT_SEQ"/>
    <property type="molecule type" value="Genomic_DNA"/>
</dbReference>
<dbReference type="EMBL" id="CP002684">
    <property type="protein sequence ID" value="AEE27725.1"/>
    <property type="molecule type" value="Genomic_DNA"/>
</dbReference>
<dbReference type="EMBL" id="BT015147">
    <property type="protein sequence ID" value="AAT85743.1"/>
    <property type="molecule type" value="mRNA"/>
</dbReference>
<dbReference type="EMBL" id="BT015896">
    <property type="protein sequence ID" value="AAU95432.1"/>
    <property type="molecule type" value="mRNA"/>
</dbReference>
<dbReference type="PIR" id="B86179">
    <property type="entry name" value="B86179"/>
</dbReference>
<dbReference type="RefSeq" id="NP_683274.1">
    <property type="nucleotide sequence ID" value="NM_148433.3"/>
</dbReference>
<dbReference type="SMR" id="Q6AWV1"/>
<dbReference type="BioGRID" id="24695">
    <property type="interactions" value="1"/>
</dbReference>
<dbReference type="FunCoup" id="Q6AWV1">
    <property type="interactions" value="2515"/>
</dbReference>
<dbReference type="STRING" id="3702.Q6AWV1"/>
<dbReference type="PaxDb" id="3702-AT1G04635.1"/>
<dbReference type="ProteomicsDB" id="251074"/>
<dbReference type="DNASU" id="839460"/>
<dbReference type="EnsemblPlants" id="AT1G04635.1">
    <property type="protein sequence ID" value="AT1G04635.1"/>
    <property type="gene ID" value="AT1G04635"/>
</dbReference>
<dbReference type="GeneID" id="839460"/>
<dbReference type="Gramene" id="AT1G04635.1">
    <property type="protein sequence ID" value="AT1G04635.1"/>
    <property type="gene ID" value="AT1G04635"/>
</dbReference>
<dbReference type="KEGG" id="ath:AT1G04635"/>
<dbReference type="Araport" id="AT1G04635"/>
<dbReference type="TAIR" id="AT1G04635">
    <property type="gene designation" value="EMB1687"/>
</dbReference>
<dbReference type="eggNOG" id="KOG4639">
    <property type="taxonomic scope" value="Eukaryota"/>
</dbReference>
<dbReference type="HOGENOM" id="CLU_086710_0_1_1"/>
<dbReference type="InParanoid" id="Q6AWV1"/>
<dbReference type="OMA" id="MQNYLDK"/>
<dbReference type="OrthoDB" id="24745at2759"/>
<dbReference type="PhylomeDB" id="Q6AWV1"/>
<dbReference type="PRO" id="PR:Q6AWV1"/>
<dbReference type="Proteomes" id="UP000006548">
    <property type="component" value="Chromosome 1"/>
</dbReference>
<dbReference type="ExpressionAtlas" id="Q6AWV1">
    <property type="expression patterns" value="baseline and differential"/>
</dbReference>
<dbReference type="GO" id="GO:0005730">
    <property type="term" value="C:nucleolus"/>
    <property type="evidence" value="ECO:0007669"/>
    <property type="project" value="UniProtKB-SubCell"/>
</dbReference>
<dbReference type="GO" id="GO:0000325">
    <property type="term" value="C:plant-type vacuole"/>
    <property type="evidence" value="ECO:0007005"/>
    <property type="project" value="TAIR"/>
</dbReference>
<dbReference type="GO" id="GO:0030677">
    <property type="term" value="C:ribonuclease P complex"/>
    <property type="evidence" value="ECO:0007669"/>
    <property type="project" value="InterPro"/>
</dbReference>
<dbReference type="GO" id="GO:0004526">
    <property type="term" value="F:ribonuclease P activity"/>
    <property type="evidence" value="ECO:0007669"/>
    <property type="project" value="UniProtKB-EC"/>
</dbReference>
<dbReference type="GO" id="GO:0033204">
    <property type="term" value="F:ribonuclease P RNA binding"/>
    <property type="evidence" value="ECO:0007669"/>
    <property type="project" value="InterPro"/>
</dbReference>
<dbReference type="GO" id="GO:0001682">
    <property type="term" value="P:tRNA 5'-leader removal"/>
    <property type="evidence" value="ECO:0007669"/>
    <property type="project" value="InterPro"/>
</dbReference>
<dbReference type="FunFam" id="3.30.70.3250:FF:000003">
    <property type="entry name" value="Ribonuclease P/MRP protein subunit POP5"/>
    <property type="match status" value="1"/>
</dbReference>
<dbReference type="Gene3D" id="3.30.70.3250">
    <property type="entry name" value="Ribonuclease P, Pop5 subunit"/>
    <property type="match status" value="1"/>
</dbReference>
<dbReference type="InterPro" id="IPR002759">
    <property type="entry name" value="Pop5/Rpp14/Rnp2-like"/>
</dbReference>
<dbReference type="InterPro" id="IPR016819">
    <property type="entry name" value="RNase_P/MRP_POP5"/>
</dbReference>
<dbReference type="InterPro" id="IPR038085">
    <property type="entry name" value="Rnp2-like_sf"/>
</dbReference>
<dbReference type="PANTHER" id="PTHR15441">
    <property type="entry name" value="RIBONUCLEASE P PROTEIN SUBUNIT P14"/>
    <property type="match status" value="1"/>
</dbReference>
<dbReference type="PANTHER" id="PTHR15441:SF2">
    <property type="entry name" value="RIBONUCLEASE P_MRP PROTEIN SUBUNIT POP5"/>
    <property type="match status" value="1"/>
</dbReference>
<dbReference type="Pfam" id="PF01900">
    <property type="entry name" value="RNase_P_Rpp14"/>
    <property type="match status" value="1"/>
</dbReference>
<dbReference type="PIRSF" id="PIRSF023803">
    <property type="entry name" value="Ribonuclease_P_prd"/>
    <property type="match status" value="1"/>
</dbReference>
<dbReference type="SUPFAM" id="SSF160350">
    <property type="entry name" value="Rnp2-like"/>
    <property type="match status" value="1"/>
</dbReference>
<name>POP5_ARATH</name>
<protein>
    <recommendedName>
        <fullName evidence="1">Probable ribonuclease P/MRP protein subunit POP5</fullName>
    </recommendedName>
    <alternativeName>
        <fullName>Protein EMBRYO DEFECTIVE 1687</fullName>
    </alternativeName>
</protein>